<name>ATPA_CYTH3</name>
<proteinExistence type="inferred from homology"/>
<reference key="1">
    <citation type="journal article" date="2007" name="Appl. Environ. Microbiol.">
        <title>Genome sequence of the cellulolytic gliding bacterium Cytophaga hutchinsonii.</title>
        <authorList>
            <person name="Xie G."/>
            <person name="Bruce D.C."/>
            <person name="Challacombe J.F."/>
            <person name="Chertkov O."/>
            <person name="Detter J.C."/>
            <person name="Gilna P."/>
            <person name="Han C.S."/>
            <person name="Lucas S."/>
            <person name="Misra M."/>
            <person name="Myers G.L."/>
            <person name="Richardson P."/>
            <person name="Tapia R."/>
            <person name="Thayer N."/>
            <person name="Thompson L.S."/>
            <person name="Brettin T.S."/>
            <person name="Henrissat B."/>
            <person name="Wilson D.B."/>
            <person name="McBride M.J."/>
        </authorList>
    </citation>
    <scope>NUCLEOTIDE SEQUENCE [LARGE SCALE GENOMIC DNA]</scope>
    <source>
        <strain>ATCC 33406 / DSM 1761 / JCM 20678 / CIP 103989 / IAM 12607 / NBRC 15051 / NCIMB 9469 / D465</strain>
    </source>
</reference>
<gene>
    <name evidence="1" type="primary">atpA</name>
    <name type="ordered locus">CHU_0183</name>
</gene>
<comment type="function">
    <text evidence="1">Produces ATP from ADP in the presence of a proton gradient across the membrane. The alpha chain is a regulatory subunit.</text>
</comment>
<comment type="catalytic activity">
    <reaction evidence="1">
        <text>ATP + H2O + 4 H(+)(in) = ADP + phosphate + 5 H(+)(out)</text>
        <dbReference type="Rhea" id="RHEA:57720"/>
        <dbReference type="ChEBI" id="CHEBI:15377"/>
        <dbReference type="ChEBI" id="CHEBI:15378"/>
        <dbReference type="ChEBI" id="CHEBI:30616"/>
        <dbReference type="ChEBI" id="CHEBI:43474"/>
        <dbReference type="ChEBI" id="CHEBI:456216"/>
        <dbReference type="EC" id="7.1.2.2"/>
    </reaction>
</comment>
<comment type="subunit">
    <text evidence="1">F-type ATPases have 2 components, CF(1) - the catalytic core - and CF(0) - the membrane proton channel. CF(1) has five subunits: alpha(3), beta(3), gamma(1), delta(1), epsilon(1). CF(0) has three main subunits: a(1), b(2) and c(9-12). The alpha and beta chains form an alternating ring which encloses part of the gamma chain. CF(1) is attached to CF(0) by a central stalk formed by the gamma and epsilon chains, while a peripheral stalk is formed by the delta and b chains.</text>
</comment>
<comment type="subcellular location">
    <subcellularLocation>
        <location evidence="1">Cell inner membrane</location>
        <topology evidence="1">Peripheral membrane protein</topology>
    </subcellularLocation>
</comment>
<comment type="similarity">
    <text evidence="1">Belongs to the ATPase alpha/beta chains family.</text>
</comment>
<sequence length="526" mass="56847">MLDVRPDEVSAVLRQQLSNSLTEAQLEEVGTVLQVGDGVARIYGLTKAQAGELLEFEGGLKGMVLNLEEDNVGAVLLGEYSAIKEGSTVKRTKQIAFVNVGEGMVGRVVDTLGNPIDGKGPITGELYKMPMERKAPGVIYRQPVTEPLQTGIKAIDAMIPIGRGQRELIIGDRQTGKTTVALDAIINQKEFYDRGEPVFCIYVACGQKASTIAGIVGTLEKHGAMAYTVVVAATASDPAPMQYFAPFTGAAVGEYFRDTGRPALVVYDDLSKQAVAYREVSLLLRRPPGREAYPGDVFYLHSRLLERAAKINKSDEIAAAMNDLPESLKGIVKGGGSLTALPIIETQAGDVSAYIPTNVISITDGQIFLEINLFNSGVRPAINVGISVSRVGGNAQIKSMKKVAGTLKLDQAQFRELEAFAKFGSDLDASTKLTIERGRRNLEILKQPAFSPVSVEEQVATIYVSTNGFMDSVVVNKVRDFEKDFLTVLRTSHKDTLKEIKSGKIDDAITEVLKKVAKEVAVKYSK</sequence>
<evidence type="ECO:0000255" key="1">
    <source>
        <dbReference type="HAMAP-Rule" id="MF_01346"/>
    </source>
</evidence>
<feature type="chain" id="PRO_1000073352" description="ATP synthase subunit alpha">
    <location>
        <begin position="1"/>
        <end position="526"/>
    </location>
</feature>
<feature type="binding site" evidence="1">
    <location>
        <begin position="171"/>
        <end position="178"/>
    </location>
    <ligand>
        <name>ATP</name>
        <dbReference type="ChEBI" id="CHEBI:30616"/>
    </ligand>
</feature>
<feature type="site" description="Required for activity" evidence="1">
    <location>
        <position position="387"/>
    </location>
</feature>
<organism>
    <name type="scientific">Cytophaga hutchinsonii (strain ATCC 33406 / DSM 1761 / CIP 103989 / NBRC 15051 / NCIMB 9469 / D465)</name>
    <dbReference type="NCBI Taxonomy" id="269798"/>
    <lineage>
        <taxon>Bacteria</taxon>
        <taxon>Pseudomonadati</taxon>
        <taxon>Bacteroidota</taxon>
        <taxon>Cytophagia</taxon>
        <taxon>Cytophagales</taxon>
        <taxon>Cytophagaceae</taxon>
        <taxon>Cytophaga</taxon>
    </lineage>
</organism>
<protein>
    <recommendedName>
        <fullName evidence="1">ATP synthase subunit alpha</fullName>
        <ecNumber evidence="1">7.1.2.2</ecNumber>
    </recommendedName>
    <alternativeName>
        <fullName evidence="1">ATP synthase F1 sector subunit alpha</fullName>
    </alternativeName>
    <alternativeName>
        <fullName evidence="1">F-ATPase subunit alpha</fullName>
    </alternativeName>
</protein>
<dbReference type="EC" id="7.1.2.2" evidence="1"/>
<dbReference type="EMBL" id="CP000383">
    <property type="protein sequence ID" value="ABG57475.1"/>
    <property type="molecule type" value="Genomic_DNA"/>
</dbReference>
<dbReference type="RefSeq" id="WP_011583591.1">
    <property type="nucleotide sequence ID" value="NC_008255.1"/>
</dbReference>
<dbReference type="SMR" id="Q11YP1"/>
<dbReference type="STRING" id="269798.CHU_0183"/>
<dbReference type="KEGG" id="chu:CHU_0183"/>
<dbReference type="eggNOG" id="COG0056">
    <property type="taxonomic scope" value="Bacteria"/>
</dbReference>
<dbReference type="HOGENOM" id="CLU_010091_2_1_10"/>
<dbReference type="OrthoDB" id="9803053at2"/>
<dbReference type="Proteomes" id="UP000001822">
    <property type="component" value="Chromosome"/>
</dbReference>
<dbReference type="GO" id="GO:0005886">
    <property type="term" value="C:plasma membrane"/>
    <property type="evidence" value="ECO:0007669"/>
    <property type="project" value="UniProtKB-SubCell"/>
</dbReference>
<dbReference type="GO" id="GO:0045259">
    <property type="term" value="C:proton-transporting ATP synthase complex"/>
    <property type="evidence" value="ECO:0007669"/>
    <property type="project" value="UniProtKB-KW"/>
</dbReference>
<dbReference type="GO" id="GO:0043531">
    <property type="term" value="F:ADP binding"/>
    <property type="evidence" value="ECO:0007669"/>
    <property type="project" value="TreeGrafter"/>
</dbReference>
<dbReference type="GO" id="GO:0005524">
    <property type="term" value="F:ATP binding"/>
    <property type="evidence" value="ECO:0007669"/>
    <property type="project" value="UniProtKB-UniRule"/>
</dbReference>
<dbReference type="GO" id="GO:0046933">
    <property type="term" value="F:proton-transporting ATP synthase activity, rotational mechanism"/>
    <property type="evidence" value="ECO:0007669"/>
    <property type="project" value="UniProtKB-UniRule"/>
</dbReference>
<dbReference type="CDD" id="cd18113">
    <property type="entry name" value="ATP-synt_F1_alpha_C"/>
    <property type="match status" value="1"/>
</dbReference>
<dbReference type="CDD" id="cd18116">
    <property type="entry name" value="ATP-synt_F1_alpha_N"/>
    <property type="match status" value="1"/>
</dbReference>
<dbReference type="CDD" id="cd01132">
    <property type="entry name" value="F1-ATPase_alpha_CD"/>
    <property type="match status" value="1"/>
</dbReference>
<dbReference type="FunFam" id="1.20.150.20:FF:000001">
    <property type="entry name" value="ATP synthase subunit alpha"/>
    <property type="match status" value="1"/>
</dbReference>
<dbReference type="FunFam" id="2.40.30.20:FF:000001">
    <property type="entry name" value="ATP synthase subunit alpha"/>
    <property type="match status" value="1"/>
</dbReference>
<dbReference type="FunFam" id="3.40.50.300:FF:000002">
    <property type="entry name" value="ATP synthase subunit alpha"/>
    <property type="match status" value="1"/>
</dbReference>
<dbReference type="Gene3D" id="2.40.30.20">
    <property type="match status" value="1"/>
</dbReference>
<dbReference type="Gene3D" id="1.20.150.20">
    <property type="entry name" value="ATP synthase alpha/beta chain, C-terminal domain"/>
    <property type="match status" value="1"/>
</dbReference>
<dbReference type="Gene3D" id="3.40.50.300">
    <property type="entry name" value="P-loop containing nucleotide triphosphate hydrolases"/>
    <property type="match status" value="1"/>
</dbReference>
<dbReference type="HAMAP" id="MF_01346">
    <property type="entry name" value="ATP_synth_alpha_bact"/>
    <property type="match status" value="1"/>
</dbReference>
<dbReference type="InterPro" id="IPR023366">
    <property type="entry name" value="ATP_synth_asu-like_sf"/>
</dbReference>
<dbReference type="InterPro" id="IPR000793">
    <property type="entry name" value="ATP_synth_asu_C"/>
</dbReference>
<dbReference type="InterPro" id="IPR038376">
    <property type="entry name" value="ATP_synth_asu_C_sf"/>
</dbReference>
<dbReference type="InterPro" id="IPR033732">
    <property type="entry name" value="ATP_synth_F1_a_nt-bd_dom"/>
</dbReference>
<dbReference type="InterPro" id="IPR005294">
    <property type="entry name" value="ATP_synth_F1_asu"/>
</dbReference>
<dbReference type="InterPro" id="IPR020003">
    <property type="entry name" value="ATPase_a/bsu_AS"/>
</dbReference>
<dbReference type="InterPro" id="IPR004100">
    <property type="entry name" value="ATPase_F1/V1/A1_a/bsu_N"/>
</dbReference>
<dbReference type="InterPro" id="IPR036121">
    <property type="entry name" value="ATPase_F1/V1/A1_a/bsu_N_sf"/>
</dbReference>
<dbReference type="InterPro" id="IPR000194">
    <property type="entry name" value="ATPase_F1/V1/A1_a/bsu_nucl-bd"/>
</dbReference>
<dbReference type="InterPro" id="IPR027417">
    <property type="entry name" value="P-loop_NTPase"/>
</dbReference>
<dbReference type="NCBIfam" id="TIGR00962">
    <property type="entry name" value="atpA"/>
    <property type="match status" value="1"/>
</dbReference>
<dbReference type="NCBIfam" id="NF009884">
    <property type="entry name" value="PRK13343.1"/>
    <property type="match status" value="1"/>
</dbReference>
<dbReference type="PANTHER" id="PTHR48082">
    <property type="entry name" value="ATP SYNTHASE SUBUNIT ALPHA, MITOCHONDRIAL"/>
    <property type="match status" value="1"/>
</dbReference>
<dbReference type="PANTHER" id="PTHR48082:SF2">
    <property type="entry name" value="ATP SYNTHASE SUBUNIT ALPHA, MITOCHONDRIAL"/>
    <property type="match status" value="1"/>
</dbReference>
<dbReference type="Pfam" id="PF00006">
    <property type="entry name" value="ATP-synt_ab"/>
    <property type="match status" value="1"/>
</dbReference>
<dbReference type="Pfam" id="PF00306">
    <property type="entry name" value="ATP-synt_ab_C"/>
    <property type="match status" value="1"/>
</dbReference>
<dbReference type="Pfam" id="PF02874">
    <property type="entry name" value="ATP-synt_ab_N"/>
    <property type="match status" value="1"/>
</dbReference>
<dbReference type="PIRSF" id="PIRSF039088">
    <property type="entry name" value="F_ATPase_subunit_alpha"/>
    <property type="match status" value="1"/>
</dbReference>
<dbReference type="SUPFAM" id="SSF47917">
    <property type="entry name" value="C-terminal domain of alpha and beta subunits of F1 ATP synthase"/>
    <property type="match status" value="1"/>
</dbReference>
<dbReference type="SUPFAM" id="SSF50615">
    <property type="entry name" value="N-terminal domain of alpha and beta subunits of F1 ATP synthase"/>
    <property type="match status" value="1"/>
</dbReference>
<dbReference type="SUPFAM" id="SSF52540">
    <property type="entry name" value="P-loop containing nucleoside triphosphate hydrolases"/>
    <property type="match status" value="1"/>
</dbReference>
<dbReference type="PROSITE" id="PS00152">
    <property type="entry name" value="ATPASE_ALPHA_BETA"/>
    <property type="match status" value="1"/>
</dbReference>
<accession>Q11YP1</accession>
<keyword id="KW-0066">ATP synthesis</keyword>
<keyword id="KW-0067">ATP-binding</keyword>
<keyword id="KW-0997">Cell inner membrane</keyword>
<keyword id="KW-1003">Cell membrane</keyword>
<keyword id="KW-0139">CF(1)</keyword>
<keyword id="KW-0375">Hydrogen ion transport</keyword>
<keyword id="KW-0406">Ion transport</keyword>
<keyword id="KW-0472">Membrane</keyword>
<keyword id="KW-0547">Nucleotide-binding</keyword>
<keyword id="KW-1185">Reference proteome</keyword>
<keyword id="KW-1278">Translocase</keyword>
<keyword id="KW-0813">Transport</keyword>